<gene>
    <name type="primary">HEMH</name>
</gene>
<feature type="transit peptide" description="Chloroplast" evidence="1">
    <location>
        <begin position="1"/>
        <end status="unknown"/>
    </location>
</feature>
<feature type="chain" id="PRO_0000008883" description="Ferrochelatase-2, chloroplastic">
    <location>
        <begin status="unknown"/>
        <end position="484"/>
    </location>
</feature>
<feature type="sequence conflict" description="In Ref. 2; AAB71887." evidence="2" ref="2">
    <original>N</original>
    <variation>K</variation>
    <location>
        <position position="165"/>
    </location>
</feature>
<dbReference type="EC" id="4.98.1.1"/>
<dbReference type="EMBL" id="D26105">
    <property type="protein sequence ID" value="BAA05101.1"/>
    <property type="molecule type" value="mRNA"/>
</dbReference>
<dbReference type="EMBL" id="AF020791">
    <property type="protein sequence ID" value="AAB71887.1"/>
    <property type="molecule type" value="Genomic_DNA"/>
</dbReference>
<dbReference type="PIR" id="T04373">
    <property type="entry name" value="T04373"/>
</dbReference>
<dbReference type="PIR" id="T05736">
    <property type="entry name" value="T05736"/>
</dbReference>
<dbReference type="SMR" id="P42045"/>
<dbReference type="UniPathway" id="UPA00252">
    <property type="reaction ID" value="UER00325"/>
</dbReference>
<dbReference type="ExpressionAtlas" id="P42045">
    <property type="expression patterns" value="baseline and differential"/>
</dbReference>
<dbReference type="GO" id="GO:0009507">
    <property type="term" value="C:chloroplast"/>
    <property type="evidence" value="ECO:0007669"/>
    <property type="project" value="UniProtKB-SubCell"/>
</dbReference>
<dbReference type="GO" id="GO:0005739">
    <property type="term" value="C:mitochondrion"/>
    <property type="evidence" value="ECO:0007669"/>
    <property type="project" value="TreeGrafter"/>
</dbReference>
<dbReference type="GO" id="GO:0004325">
    <property type="term" value="F:ferrochelatase activity"/>
    <property type="evidence" value="ECO:0007669"/>
    <property type="project" value="InterPro"/>
</dbReference>
<dbReference type="GO" id="GO:0006783">
    <property type="term" value="P:heme biosynthetic process"/>
    <property type="evidence" value="ECO:0007669"/>
    <property type="project" value="UniProtKB-KW"/>
</dbReference>
<dbReference type="CDD" id="cd00419">
    <property type="entry name" value="Ferrochelatase_C"/>
    <property type="match status" value="1"/>
</dbReference>
<dbReference type="CDD" id="cd03411">
    <property type="entry name" value="Ferrochelatase_N"/>
    <property type="match status" value="1"/>
</dbReference>
<dbReference type="FunFam" id="3.40.50.1400:FF:000006">
    <property type="entry name" value="Ferrochelatase"/>
    <property type="match status" value="1"/>
</dbReference>
<dbReference type="Gene3D" id="3.40.50.1400">
    <property type="match status" value="2"/>
</dbReference>
<dbReference type="HAMAP" id="MF_00323">
    <property type="entry name" value="Ferrochelatase"/>
    <property type="match status" value="1"/>
</dbReference>
<dbReference type="InterPro" id="IPR001015">
    <property type="entry name" value="Ferrochelatase"/>
</dbReference>
<dbReference type="InterPro" id="IPR019772">
    <property type="entry name" value="Ferrochelatase_AS"/>
</dbReference>
<dbReference type="InterPro" id="IPR033644">
    <property type="entry name" value="Ferrochelatase_C"/>
</dbReference>
<dbReference type="InterPro" id="IPR033659">
    <property type="entry name" value="Ferrochelatase_N"/>
</dbReference>
<dbReference type="NCBIfam" id="TIGR00109">
    <property type="entry name" value="hemH"/>
    <property type="match status" value="1"/>
</dbReference>
<dbReference type="PANTHER" id="PTHR11108">
    <property type="entry name" value="FERROCHELATASE"/>
    <property type="match status" value="1"/>
</dbReference>
<dbReference type="PANTHER" id="PTHR11108:SF4">
    <property type="entry name" value="FERROCHELATASE-1, CHLOROPLASTIC_MITOCHONDRIAL"/>
    <property type="match status" value="1"/>
</dbReference>
<dbReference type="Pfam" id="PF00762">
    <property type="entry name" value="Ferrochelatase"/>
    <property type="match status" value="1"/>
</dbReference>
<dbReference type="SUPFAM" id="SSF53800">
    <property type="entry name" value="Chelatase"/>
    <property type="match status" value="1"/>
</dbReference>
<dbReference type="PROSITE" id="PS00534">
    <property type="entry name" value="FERROCHELATASE"/>
    <property type="match status" value="1"/>
</dbReference>
<organism>
    <name type="scientific">Hordeum vulgare</name>
    <name type="common">Barley</name>
    <dbReference type="NCBI Taxonomy" id="4513"/>
    <lineage>
        <taxon>Eukaryota</taxon>
        <taxon>Viridiplantae</taxon>
        <taxon>Streptophyta</taxon>
        <taxon>Embryophyta</taxon>
        <taxon>Tracheophyta</taxon>
        <taxon>Spermatophyta</taxon>
        <taxon>Magnoliopsida</taxon>
        <taxon>Liliopsida</taxon>
        <taxon>Poales</taxon>
        <taxon>Poaceae</taxon>
        <taxon>BOP clade</taxon>
        <taxon>Pooideae</taxon>
        <taxon>Triticodae</taxon>
        <taxon>Triticeae</taxon>
        <taxon>Hordeinae</taxon>
        <taxon>Hordeum</taxon>
    </lineage>
</organism>
<evidence type="ECO:0000255" key="1"/>
<evidence type="ECO:0000305" key="2"/>
<name>HEMH_HORVU</name>
<comment type="function">
    <text>Catalyzes the ferrous insertion into protoporphyrin IX.</text>
</comment>
<comment type="catalytic activity">
    <reaction>
        <text>heme b + 2 H(+) = protoporphyrin IX + Fe(2+)</text>
        <dbReference type="Rhea" id="RHEA:22584"/>
        <dbReference type="ChEBI" id="CHEBI:15378"/>
        <dbReference type="ChEBI" id="CHEBI:29033"/>
        <dbReference type="ChEBI" id="CHEBI:57306"/>
        <dbReference type="ChEBI" id="CHEBI:60344"/>
        <dbReference type="EC" id="4.98.1.1"/>
    </reaction>
</comment>
<comment type="pathway">
    <text>Porphyrin-containing compound metabolism; protoheme biosynthesis; protoheme from protoporphyrin-IX: step 1/1.</text>
</comment>
<comment type="subcellular location">
    <subcellularLocation>
        <location>Plastid</location>
        <location>Chloroplast</location>
    </subcellularLocation>
</comment>
<comment type="similarity">
    <text evidence="2">Belongs to the ferrochelatase family.</text>
</comment>
<proteinExistence type="evidence at transcript level"/>
<protein>
    <recommendedName>
        <fullName>Ferrochelatase-2, chloroplastic</fullName>
        <ecNumber>4.98.1.1</ecNumber>
    </recommendedName>
    <alternativeName>
        <fullName>Ferrochelatase II</fullName>
    </alternativeName>
    <alternativeName>
        <fullName>Heme synthase 2</fullName>
    </alternativeName>
    <alternativeName>
        <fullName>Protoheme ferro-lyase 2</fullName>
    </alternativeName>
</protein>
<sequence>MECVRSGALDLGRSGNFLGKSGSTTSCGKVRCSTNLAGSTKCEQNLHGKAKPLLLSASGKARGTSGLVHRSPVLKHQHHLSVRSTSTDVCTTFDEDVKGVSSHAVEEKVGVLLLNLGGPETLNDVQPFLFNLFADPDIIRLPRLFRFLQRPLAKLISTFRAPKSNEGYASIGGGSPLRKITDEQANALKVALKSKNLEADIYVGMRYWYPFTEEAIDQIKKDKITKLVVLPLYPQYSISTSGSSIRVLQNIVKEDPYFAGLPISIIESWYQREGYVKSMADLIEKELSVFSNPEEVMIFFSAHGVPLTYVKDAGDPYRDQMEDCIALIMEELKSRGTLNDHTLAYQSRVGPVQWLKPYTDEVLVELGQKGVKSLLAVPVSFVSEHIETLEEIDMEYRELALESGIENWGRVPALGCTSSFISDLADAVVEALPSASAMATRKVKDTDSDMDMMHYLTKMFLGSVLAFFLLLSPRLVSAFRNTLQ</sequence>
<reference key="1">
    <citation type="journal article" date="1994" name="Plant Physiol.">
        <title>Nucleotide sequences of cDNA clones encoding ferrochelatase from barley and cucumber.</title>
        <authorList>
            <person name="Miyamoto K."/>
            <person name="Tanaka R."/>
            <person name="Teramoto H."/>
            <person name="Masuda T."/>
            <person name="Tsuji H."/>
            <person name="Inokuchi H."/>
        </authorList>
    </citation>
    <scope>NUCLEOTIDE SEQUENCE [MRNA]</scope>
    <source>
        <strain>cv. Svalofs Bonus</strain>
    </source>
</reference>
<reference key="2">
    <citation type="submission" date="1997-08" db="EMBL/GenBank/DDBJ databases">
        <authorList>
            <person name="Hansson M."/>
            <person name="Gough S.P."/>
            <person name="Kannangara C.G."/>
            <person name="von Wettstein D."/>
        </authorList>
    </citation>
    <scope>NUCLEOTIDE SEQUENCE [GENOMIC DNA]</scope>
</reference>
<accession>P42045</accession>
<accession>O22524</accession>
<keyword id="KW-0150">Chloroplast</keyword>
<keyword id="KW-0350">Heme biosynthesis</keyword>
<keyword id="KW-0408">Iron</keyword>
<keyword id="KW-0456">Lyase</keyword>
<keyword id="KW-0934">Plastid</keyword>
<keyword id="KW-0627">Porphyrin biosynthesis</keyword>
<keyword id="KW-0809">Transit peptide</keyword>